<dbReference type="EC" id="6.3.4.20" evidence="1"/>
<dbReference type="EMBL" id="BX571965">
    <property type="protein sequence ID" value="CAH34164.1"/>
    <property type="molecule type" value="Genomic_DNA"/>
</dbReference>
<dbReference type="RefSeq" id="WP_004190026.1">
    <property type="nucleotide sequence ID" value="NZ_CP009538.1"/>
</dbReference>
<dbReference type="RefSeq" id="YP_106805.1">
    <property type="nucleotide sequence ID" value="NC_006350.1"/>
</dbReference>
<dbReference type="SMR" id="Q63YL0"/>
<dbReference type="STRING" id="272560.BPSL0177"/>
<dbReference type="GeneID" id="93058685"/>
<dbReference type="KEGG" id="bps:BPSL0177"/>
<dbReference type="PATRIC" id="fig|272560.51.peg.1543"/>
<dbReference type="eggNOG" id="COG0603">
    <property type="taxonomic scope" value="Bacteria"/>
</dbReference>
<dbReference type="UniPathway" id="UPA00391"/>
<dbReference type="Proteomes" id="UP000000605">
    <property type="component" value="Chromosome 1"/>
</dbReference>
<dbReference type="GO" id="GO:0005524">
    <property type="term" value="F:ATP binding"/>
    <property type="evidence" value="ECO:0007669"/>
    <property type="project" value="UniProtKB-UniRule"/>
</dbReference>
<dbReference type="GO" id="GO:0016879">
    <property type="term" value="F:ligase activity, forming carbon-nitrogen bonds"/>
    <property type="evidence" value="ECO:0007669"/>
    <property type="project" value="UniProtKB-UniRule"/>
</dbReference>
<dbReference type="GO" id="GO:0008270">
    <property type="term" value="F:zinc ion binding"/>
    <property type="evidence" value="ECO:0007669"/>
    <property type="project" value="UniProtKB-UniRule"/>
</dbReference>
<dbReference type="GO" id="GO:0008616">
    <property type="term" value="P:queuosine biosynthetic process"/>
    <property type="evidence" value="ECO:0007669"/>
    <property type="project" value="UniProtKB-UniRule"/>
</dbReference>
<dbReference type="CDD" id="cd01995">
    <property type="entry name" value="QueC-like"/>
    <property type="match status" value="1"/>
</dbReference>
<dbReference type="Gene3D" id="3.40.50.620">
    <property type="entry name" value="HUPs"/>
    <property type="match status" value="1"/>
</dbReference>
<dbReference type="HAMAP" id="MF_01633">
    <property type="entry name" value="QueC"/>
    <property type="match status" value="1"/>
</dbReference>
<dbReference type="InterPro" id="IPR018317">
    <property type="entry name" value="QueC"/>
</dbReference>
<dbReference type="InterPro" id="IPR014729">
    <property type="entry name" value="Rossmann-like_a/b/a_fold"/>
</dbReference>
<dbReference type="NCBIfam" id="TIGR00364">
    <property type="entry name" value="7-cyano-7-deazaguanine synthase QueC"/>
    <property type="match status" value="1"/>
</dbReference>
<dbReference type="PANTHER" id="PTHR42914">
    <property type="entry name" value="7-CYANO-7-DEAZAGUANINE SYNTHASE"/>
    <property type="match status" value="1"/>
</dbReference>
<dbReference type="PANTHER" id="PTHR42914:SF1">
    <property type="entry name" value="7-CYANO-7-DEAZAGUANINE SYNTHASE"/>
    <property type="match status" value="1"/>
</dbReference>
<dbReference type="Pfam" id="PF06508">
    <property type="entry name" value="QueC"/>
    <property type="match status" value="1"/>
</dbReference>
<dbReference type="PIRSF" id="PIRSF006293">
    <property type="entry name" value="ExsB"/>
    <property type="match status" value="1"/>
</dbReference>
<dbReference type="SUPFAM" id="SSF52402">
    <property type="entry name" value="Adenine nucleotide alpha hydrolases-like"/>
    <property type="match status" value="1"/>
</dbReference>
<sequence>MIRTDAKDGALVLFSGGQDSATCVAWALERYQTVETLGFDYGQRHRVELECREGVRDALKRRFPQWSHKLGDDHLIDLSVLGSISDTAMTRAIEIETASNGLPNTFVPGRNLLFMTIAAAIAYRRGLRALVGGMCETDFSGYPDCRDDTMKALQVALNLGMDTRFVLETPLMWLDKADTWRLAEQLGGAPLVELIRVETHTCYVGERSELHDWGFGCGECPACKLRKRGYDAYLRGESVTEAPA</sequence>
<evidence type="ECO:0000255" key="1">
    <source>
        <dbReference type="HAMAP-Rule" id="MF_01633"/>
    </source>
</evidence>
<reference key="1">
    <citation type="journal article" date="2004" name="Proc. Natl. Acad. Sci. U.S.A.">
        <title>Genomic plasticity of the causative agent of melioidosis, Burkholderia pseudomallei.</title>
        <authorList>
            <person name="Holden M.T.G."/>
            <person name="Titball R.W."/>
            <person name="Peacock S.J."/>
            <person name="Cerdeno-Tarraga A.-M."/>
            <person name="Atkins T."/>
            <person name="Crossman L.C."/>
            <person name="Pitt T."/>
            <person name="Churcher C."/>
            <person name="Mungall K.L."/>
            <person name="Bentley S.D."/>
            <person name="Sebaihia M."/>
            <person name="Thomson N.R."/>
            <person name="Bason N."/>
            <person name="Beacham I.R."/>
            <person name="Brooks K."/>
            <person name="Brown K.A."/>
            <person name="Brown N.F."/>
            <person name="Challis G.L."/>
            <person name="Cherevach I."/>
            <person name="Chillingworth T."/>
            <person name="Cronin A."/>
            <person name="Crossett B."/>
            <person name="Davis P."/>
            <person name="DeShazer D."/>
            <person name="Feltwell T."/>
            <person name="Fraser A."/>
            <person name="Hance Z."/>
            <person name="Hauser H."/>
            <person name="Holroyd S."/>
            <person name="Jagels K."/>
            <person name="Keith K.E."/>
            <person name="Maddison M."/>
            <person name="Moule S."/>
            <person name="Price C."/>
            <person name="Quail M.A."/>
            <person name="Rabbinowitsch E."/>
            <person name="Rutherford K."/>
            <person name="Sanders M."/>
            <person name="Simmonds M."/>
            <person name="Songsivilai S."/>
            <person name="Stevens K."/>
            <person name="Tumapa S."/>
            <person name="Vesaratchavest M."/>
            <person name="Whitehead S."/>
            <person name="Yeats C."/>
            <person name="Barrell B.G."/>
            <person name="Oyston P.C.F."/>
            <person name="Parkhill J."/>
        </authorList>
    </citation>
    <scope>NUCLEOTIDE SEQUENCE [LARGE SCALE GENOMIC DNA]</scope>
    <source>
        <strain>K96243</strain>
    </source>
</reference>
<comment type="function">
    <text evidence="1">Catalyzes the ATP-dependent conversion of 7-carboxy-7-deazaguanine (CDG) to 7-cyano-7-deazaguanine (preQ(0)).</text>
</comment>
<comment type="catalytic activity">
    <reaction evidence="1">
        <text>7-carboxy-7-deazaguanine + NH4(+) + ATP = 7-cyano-7-deazaguanine + ADP + phosphate + H2O + H(+)</text>
        <dbReference type="Rhea" id="RHEA:27982"/>
        <dbReference type="ChEBI" id="CHEBI:15377"/>
        <dbReference type="ChEBI" id="CHEBI:15378"/>
        <dbReference type="ChEBI" id="CHEBI:28938"/>
        <dbReference type="ChEBI" id="CHEBI:30616"/>
        <dbReference type="ChEBI" id="CHEBI:43474"/>
        <dbReference type="ChEBI" id="CHEBI:45075"/>
        <dbReference type="ChEBI" id="CHEBI:61036"/>
        <dbReference type="ChEBI" id="CHEBI:456216"/>
        <dbReference type="EC" id="6.3.4.20"/>
    </reaction>
</comment>
<comment type="cofactor">
    <cofactor evidence="1">
        <name>Zn(2+)</name>
        <dbReference type="ChEBI" id="CHEBI:29105"/>
    </cofactor>
    <text evidence="1">Binds 1 zinc ion per subunit.</text>
</comment>
<comment type="pathway">
    <text evidence="1">Purine metabolism; 7-cyano-7-deazaguanine biosynthesis.</text>
</comment>
<comment type="similarity">
    <text evidence="1">Belongs to the QueC family.</text>
</comment>
<name>QUEC_BURPS</name>
<protein>
    <recommendedName>
        <fullName evidence="1">7-cyano-7-deazaguanine synthase</fullName>
        <ecNumber evidence="1">6.3.4.20</ecNumber>
    </recommendedName>
    <alternativeName>
        <fullName evidence="1">7-cyano-7-carbaguanine synthase</fullName>
    </alternativeName>
    <alternativeName>
        <fullName evidence="1">PreQ(0) synthase</fullName>
    </alternativeName>
    <alternativeName>
        <fullName evidence="1">Queuosine biosynthesis protein QueC</fullName>
    </alternativeName>
</protein>
<feature type="chain" id="PRO_0000246818" description="7-cyano-7-deazaguanine synthase">
    <location>
        <begin position="1"/>
        <end position="244"/>
    </location>
</feature>
<feature type="binding site" evidence="1">
    <location>
        <begin position="14"/>
        <end position="24"/>
    </location>
    <ligand>
        <name>ATP</name>
        <dbReference type="ChEBI" id="CHEBI:30616"/>
    </ligand>
</feature>
<feature type="binding site" evidence="1">
    <location>
        <position position="202"/>
    </location>
    <ligand>
        <name>Zn(2+)</name>
        <dbReference type="ChEBI" id="CHEBI:29105"/>
    </ligand>
</feature>
<feature type="binding site" evidence="1">
    <location>
        <position position="217"/>
    </location>
    <ligand>
        <name>Zn(2+)</name>
        <dbReference type="ChEBI" id="CHEBI:29105"/>
    </ligand>
</feature>
<feature type="binding site" evidence="1">
    <location>
        <position position="220"/>
    </location>
    <ligand>
        <name>Zn(2+)</name>
        <dbReference type="ChEBI" id="CHEBI:29105"/>
    </ligand>
</feature>
<feature type="binding site" evidence="1">
    <location>
        <position position="223"/>
    </location>
    <ligand>
        <name>Zn(2+)</name>
        <dbReference type="ChEBI" id="CHEBI:29105"/>
    </ligand>
</feature>
<keyword id="KW-0067">ATP-binding</keyword>
<keyword id="KW-0436">Ligase</keyword>
<keyword id="KW-0479">Metal-binding</keyword>
<keyword id="KW-0547">Nucleotide-binding</keyword>
<keyword id="KW-0671">Queuosine biosynthesis</keyword>
<keyword id="KW-1185">Reference proteome</keyword>
<keyword id="KW-0862">Zinc</keyword>
<gene>
    <name evidence="1" type="primary">queC</name>
    <name type="ordered locus">BPSL0177</name>
</gene>
<proteinExistence type="inferred from homology"/>
<organism>
    <name type="scientific">Burkholderia pseudomallei (strain K96243)</name>
    <dbReference type="NCBI Taxonomy" id="272560"/>
    <lineage>
        <taxon>Bacteria</taxon>
        <taxon>Pseudomonadati</taxon>
        <taxon>Pseudomonadota</taxon>
        <taxon>Betaproteobacteria</taxon>
        <taxon>Burkholderiales</taxon>
        <taxon>Burkholderiaceae</taxon>
        <taxon>Burkholderia</taxon>
        <taxon>pseudomallei group</taxon>
    </lineage>
</organism>
<accession>Q63YL0</accession>